<feature type="chain" id="PRO_0000362332" description="ATP synthase subunit a">
    <location>
        <begin position="1"/>
        <end position="253"/>
    </location>
</feature>
<feature type="transmembrane region" description="Helical" evidence="1">
    <location>
        <begin position="27"/>
        <end position="47"/>
    </location>
</feature>
<feature type="transmembrane region" description="Helical" evidence="1">
    <location>
        <begin position="87"/>
        <end position="107"/>
    </location>
</feature>
<feature type="transmembrane region" description="Helical" evidence="1">
    <location>
        <begin position="117"/>
        <end position="137"/>
    </location>
</feature>
<feature type="transmembrane region" description="Helical" evidence="1">
    <location>
        <begin position="146"/>
        <end position="166"/>
    </location>
</feature>
<feature type="transmembrane region" description="Helical" evidence="1">
    <location>
        <begin position="196"/>
        <end position="216"/>
    </location>
</feature>
<feature type="transmembrane region" description="Helical" evidence="1">
    <location>
        <begin position="224"/>
        <end position="244"/>
    </location>
</feature>
<sequence>MPAIALDPIHQFEVTKWLDLRLGNIDISFTNASGFMLLGVVLVIGFFSMATRKGELVPSRLQSVAEMGYGFIADMVRSAAGEEGLKFFPFVFTLFFFILFANLIGMVPYAFTTTSHIIVTGALAMTVILMVIVVGLIKNGLGFFKLFAPSGAPLPIYIILTPIEIISFLARPLTLGLRLFANMLAGHIMLKLFAGFTVMLIGAGAIYIPVAALAFAMGVALNALEFLVAGLQAYVFAILTCVYLNDALHADAH</sequence>
<dbReference type="EMBL" id="CP000158">
    <property type="protein sequence ID" value="ABI75916.1"/>
    <property type="molecule type" value="Genomic_DNA"/>
</dbReference>
<dbReference type="RefSeq" id="WP_011646920.1">
    <property type="nucleotide sequence ID" value="NC_008358.1"/>
</dbReference>
<dbReference type="SMR" id="Q0C0X3"/>
<dbReference type="STRING" id="228405.HNE_1919"/>
<dbReference type="KEGG" id="hne:HNE_1919"/>
<dbReference type="eggNOG" id="COG0356">
    <property type="taxonomic scope" value="Bacteria"/>
</dbReference>
<dbReference type="HOGENOM" id="CLU_041018_0_2_5"/>
<dbReference type="Proteomes" id="UP000001959">
    <property type="component" value="Chromosome"/>
</dbReference>
<dbReference type="GO" id="GO:0005886">
    <property type="term" value="C:plasma membrane"/>
    <property type="evidence" value="ECO:0007669"/>
    <property type="project" value="UniProtKB-SubCell"/>
</dbReference>
<dbReference type="GO" id="GO:0045259">
    <property type="term" value="C:proton-transporting ATP synthase complex"/>
    <property type="evidence" value="ECO:0007669"/>
    <property type="project" value="UniProtKB-KW"/>
</dbReference>
<dbReference type="GO" id="GO:0046933">
    <property type="term" value="F:proton-transporting ATP synthase activity, rotational mechanism"/>
    <property type="evidence" value="ECO:0007669"/>
    <property type="project" value="UniProtKB-UniRule"/>
</dbReference>
<dbReference type="CDD" id="cd00310">
    <property type="entry name" value="ATP-synt_Fo_a_6"/>
    <property type="match status" value="1"/>
</dbReference>
<dbReference type="Gene3D" id="1.20.120.220">
    <property type="entry name" value="ATP synthase, F0 complex, subunit A"/>
    <property type="match status" value="1"/>
</dbReference>
<dbReference type="HAMAP" id="MF_01393">
    <property type="entry name" value="ATP_synth_a_bact"/>
    <property type="match status" value="1"/>
</dbReference>
<dbReference type="InterPro" id="IPR000568">
    <property type="entry name" value="ATP_synth_F0_asu"/>
</dbReference>
<dbReference type="InterPro" id="IPR023011">
    <property type="entry name" value="ATP_synth_F0_asu_AS"/>
</dbReference>
<dbReference type="InterPro" id="IPR045083">
    <property type="entry name" value="ATP_synth_F0_asu_bact/mt"/>
</dbReference>
<dbReference type="InterPro" id="IPR035908">
    <property type="entry name" value="F0_ATP_A_sf"/>
</dbReference>
<dbReference type="NCBIfam" id="TIGR01131">
    <property type="entry name" value="ATP_synt_6_or_A"/>
    <property type="match status" value="1"/>
</dbReference>
<dbReference type="NCBIfam" id="NF004482">
    <property type="entry name" value="PRK05815.2-4"/>
    <property type="match status" value="1"/>
</dbReference>
<dbReference type="PANTHER" id="PTHR11410">
    <property type="entry name" value="ATP SYNTHASE SUBUNIT A"/>
    <property type="match status" value="1"/>
</dbReference>
<dbReference type="PANTHER" id="PTHR11410:SF0">
    <property type="entry name" value="ATP SYNTHASE SUBUNIT A"/>
    <property type="match status" value="1"/>
</dbReference>
<dbReference type="Pfam" id="PF00119">
    <property type="entry name" value="ATP-synt_A"/>
    <property type="match status" value="1"/>
</dbReference>
<dbReference type="PRINTS" id="PR00123">
    <property type="entry name" value="ATPASEA"/>
</dbReference>
<dbReference type="SUPFAM" id="SSF81336">
    <property type="entry name" value="F1F0 ATP synthase subunit A"/>
    <property type="match status" value="1"/>
</dbReference>
<dbReference type="PROSITE" id="PS00449">
    <property type="entry name" value="ATPASE_A"/>
    <property type="match status" value="1"/>
</dbReference>
<comment type="function">
    <text evidence="1">Key component of the proton channel; it plays a direct role in the translocation of protons across the membrane.</text>
</comment>
<comment type="subunit">
    <text evidence="1">F-type ATPases have 2 components, CF(1) - the catalytic core - and CF(0) - the membrane proton channel. CF(1) has five subunits: alpha(3), beta(3), gamma(1), delta(1), epsilon(1). CF(0) has three main subunits: a(1), b(2) and c(9-12). The alpha and beta chains form an alternating ring which encloses part of the gamma chain. CF(1) is attached to CF(0) by a central stalk formed by the gamma and epsilon chains, while a peripheral stalk is formed by the delta and b chains.</text>
</comment>
<comment type="subcellular location">
    <subcellularLocation>
        <location evidence="1">Cell inner membrane</location>
        <topology evidence="1">Multi-pass membrane protein</topology>
    </subcellularLocation>
</comment>
<comment type="similarity">
    <text evidence="1">Belongs to the ATPase A chain family.</text>
</comment>
<evidence type="ECO:0000255" key="1">
    <source>
        <dbReference type="HAMAP-Rule" id="MF_01393"/>
    </source>
</evidence>
<gene>
    <name evidence="1" type="primary">atpB</name>
    <name type="ordered locus">HNE_1919</name>
</gene>
<keyword id="KW-0066">ATP synthesis</keyword>
<keyword id="KW-0997">Cell inner membrane</keyword>
<keyword id="KW-1003">Cell membrane</keyword>
<keyword id="KW-0138">CF(0)</keyword>
<keyword id="KW-0375">Hydrogen ion transport</keyword>
<keyword id="KW-0406">Ion transport</keyword>
<keyword id="KW-0472">Membrane</keyword>
<keyword id="KW-1185">Reference proteome</keyword>
<keyword id="KW-0812">Transmembrane</keyword>
<keyword id="KW-1133">Transmembrane helix</keyword>
<keyword id="KW-0813">Transport</keyword>
<accession>Q0C0X3</accession>
<reference key="1">
    <citation type="journal article" date="2006" name="J. Bacteriol.">
        <title>Comparative genomic evidence for a close relationship between the dimorphic prosthecate bacteria Hyphomonas neptunium and Caulobacter crescentus.</title>
        <authorList>
            <person name="Badger J.H."/>
            <person name="Hoover T.R."/>
            <person name="Brun Y.V."/>
            <person name="Weiner R.M."/>
            <person name="Laub M.T."/>
            <person name="Alexandre G."/>
            <person name="Mrazek J."/>
            <person name="Ren Q."/>
            <person name="Paulsen I.T."/>
            <person name="Nelson K.E."/>
            <person name="Khouri H.M."/>
            <person name="Radune D."/>
            <person name="Sosa J."/>
            <person name="Dodson R.J."/>
            <person name="Sullivan S.A."/>
            <person name="Rosovitz M.J."/>
            <person name="Madupu R."/>
            <person name="Brinkac L.M."/>
            <person name="Durkin A.S."/>
            <person name="Daugherty S.C."/>
            <person name="Kothari S.P."/>
            <person name="Giglio M.G."/>
            <person name="Zhou L."/>
            <person name="Haft D.H."/>
            <person name="Selengut J.D."/>
            <person name="Davidsen T.M."/>
            <person name="Yang Q."/>
            <person name="Zafar N."/>
            <person name="Ward N.L."/>
        </authorList>
    </citation>
    <scope>NUCLEOTIDE SEQUENCE [LARGE SCALE GENOMIC DNA]</scope>
    <source>
        <strain>ATCC 15444</strain>
    </source>
</reference>
<name>ATP6_HYPNA</name>
<organism>
    <name type="scientific">Hyphomonas neptunium (strain ATCC 15444)</name>
    <dbReference type="NCBI Taxonomy" id="228405"/>
    <lineage>
        <taxon>Bacteria</taxon>
        <taxon>Pseudomonadati</taxon>
        <taxon>Pseudomonadota</taxon>
        <taxon>Alphaproteobacteria</taxon>
        <taxon>Hyphomonadales</taxon>
        <taxon>Hyphomonadaceae</taxon>
        <taxon>Hyphomonas</taxon>
    </lineage>
</organism>
<proteinExistence type="inferred from homology"/>
<protein>
    <recommendedName>
        <fullName evidence="1">ATP synthase subunit a</fullName>
    </recommendedName>
    <alternativeName>
        <fullName evidence="1">ATP synthase F0 sector subunit a</fullName>
    </alternativeName>
    <alternativeName>
        <fullName evidence="1">F-ATPase subunit 6</fullName>
    </alternativeName>
</protein>